<comment type="function">
    <text evidence="1">Forms part of the ribosomal stalk, playing a central role in the interaction of the ribosome with GTP-bound translation factors.</text>
</comment>
<comment type="subunit">
    <text evidence="1">Part of the ribosomal stalk of the 50S ribosomal subunit. The N-terminus interacts with L11 and the large rRNA to form the base of the stalk. The C-terminus forms an elongated spine to which L12 dimers bind in a sequential fashion forming a multimeric L10(L12)X complex.</text>
</comment>
<comment type="similarity">
    <text evidence="1">Belongs to the universal ribosomal protein uL10 family.</text>
</comment>
<sequence>MSLNRSEKEAVINEVTSLAAKAQTLVIAEYRGITVADMTKLRVDARSKGVSLSVLKNTLARRAVAGSQFDVVADQMTGPLIYGFSEDAVAAAKVVADFAKTNDKLVIRGGAFAGKALDVNGVKQLANIPSKEVLLAQLCGLLMSPISRTAVVLGALAAKKGEGEAAAA</sequence>
<protein>
    <recommendedName>
        <fullName evidence="1">Large ribosomal subunit protein uL10</fullName>
    </recommendedName>
    <alternativeName>
        <fullName evidence="2">50S ribosomal protein L10</fullName>
    </alternativeName>
</protein>
<proteinExistence type="inferred from homology"/>
<dbReference type="EMBL" id="CP000512">
    <property type="protein sequence ID" value="ABM35070.1"/>
    <property type="molecule type" value="Genomic_DNA"/>
</dbReference>
<dbReference type="RefSeq" id="WP_011797539.1">
    <property type="nucleotide sequence ID" value="NC_008752.1"/>
</dbReference>
<dbReference type="SMR" id="A1TVT2"/>
<dbReference type="STRING" id="397945.Aave_4533"/>
<dbReference type="GeneID" id="79789512"/>
<dbReference type="KEGG" id="aav:Aave_4533"/>
<dbReference type="eggNOG" id="COG0244">
    <property type="taxonomic scope" value="Bacteria"/>
</dbReference>
<dbReference type="HOGENOM" id="CLU_092227_0_1_4"/>
<dbReference type="OrthoDB" id="9808307at2"/>
<dbReference type="Proteomes" id="UP000002596">
    <property type="component" value="Chromosome"/>
</dbReference>
<dbReference type="GO" id="GO:0015934">
    <property type="term" value="C:large ribosomal subunit"/>
    <property type="evidence" value="ECO:0007669"/>
    <property type="project" value="InterPro"/>
</dbReference>
<dbReference type="GO" id="GO:0070180">
    <property type="term" value="F:large ribosomal subunit rRNA binding"/>
    <property type="evidence" value="ECO:0007669"/>
    <property type="project" value="UniProtKB-UniRule"/>
</dbReference>
<dbReference type="GO" id="GO:0003735">
    <property type="term" value="F:structural constituent of ribosome"/>
    <property type="evidence" value="ECO:0007669"/>
    <property type="project" value="InterPro"/>
</dbReference>
<dbReference type="GO" id="GO:0006412">
    <property type="term" value="P:translation"/>
    <property type="evidence" value="ECO:0007669"/>
    <property type="project" value="UniProtKB-UniRule"/>
</dbReference>
<dbReference type="CDD" id="cd05797">
    <property type="entry name" value="Ribosomal_L10"/>
    <property type="match status" value="1"/>
</dbReference>
<dbReference type="Gene3D" id="3.30.70.1730">
    <property type="match status" value="1"/>
</dbReference>
<dbReference type="Gene3D" id="6.10.250.290">
    <property type="match status" value="1"/>
</dbReference>
<dbReference type="HAMAP" id="MF_00362">
    <property type="entry name" value="Ribosomal_uL10"/>
    <property type="match status" value="1"/>
</dbReference>
<dbReference type="InterPro" id="IPR001790">
    <property type="entry name" value="Ribosomal_uL10"/>
</dbReference>
<dbReference type="InterPro" id="IPR043141">
    <property type="entry name" value="Ribosomal_uL10-like_sf"/>
</dbReference>
<dbReference type="InterPro" id="IPR022973">
    <property type="entry name" value="Ribosomal_uL10_bac"/>
</dbReference>
<dbReference type="InterPro" id="IPR047865">
    <property type="entry name" value="Ribosomal_uL10_bac_type"/>
</dbReference>
<dbReference type="InterPro" id="IPR002363">
    <property type="entry name" value="Ribosomal_uL10_CS_bac"/>
</dbReference>
<dbReference type="NCBIfam" id="NF000955">
    <property type="entry name" value="PRK00099.1-1"/>
    <property type="match status" value="1"/>
</dbReference>
<dbReference type="PANTHER" id="PTHR11560">
    <property type="entry name" value="39S RIBOSOMAL PROTEIN L10, MITOCHONDRIAL"/>
    <property type="match status" value="1"/>
</dbReference>
<dbReference type="Pfam" id="PF00466">
    <property type="entry name" value="Ribosomal_L10"/>
    <property type="match status" value="1"/>
</dbReference>
<dbReference type="SUPFAM" id="SSF160369">
    <property type="entry name" value="Ribosomal protein L10-like"/>
    <property type="match status" value="1"/>
</dbReference>
<dbReference type="PROSITE" id="PS01109">
    <property type="entry name" value="RIBOSOMAL_L10"/>
    <property type="match status" value="1"/>
</dbReference>
<keyword id="KW-0687">Ribonucleoprotein</keyword>
<keyword id="KW-0689">Ribosomal protein</keyword>
<keyword id="KW-0694">RNA-binding</keyword>
<keyword id="KW-0699">rRNA-binding</keyword>
<name>RL10_PARC0</name>
<evidence type="ECO:0000255" key="1">
    <source>
        <dbReference type="HAMAP-Rule" id="MF_00362"/>
    </source>
</evidence>
<evidence type="ECO:0000305" key="2"/>
<accession>A1TVT2</accession>
<organism>
    <name type="scientific">Paracidovorax citrulli (strain AAC00-1)</name>
    <name type="common">Acidovorax citrulli</name>
    <dbReference type="NCBI Taxonomy" id="397945"/>
    <lineage>
        <taxon>Bacteria</taxon>
        <taxon>Pseudomonadati</taxon>
        <taxon>Pseudomonadota</taxon>
        <taxon>Betaproteobacteria</taxon>
        <taxon>Burkholderiales</taxon>
        <taxon>Comamonadaceae</taxon>
        <taxon>Paracidovorax</taxon>
    </lineage>
</organism>
<feature type="chain" id="PRO_1000005455" description="Large ribosomal subunit protein uL10">
    <location>
        <begin position="1"/>
        <end position="168"/>
    </location>
</feature>
<gene>
    <name evidence="1" type="primary">rplJ</name>
    <name type="ordered locus">Aave_4533</name>
</gene>
<reference key="1">
    <citation type="submission" date="2006-12" db="EMBL/GenBank/DDBJ databases">
        <title>Complete sequence of Acidovorax avenae subsp. citrulli AAC00-1.</title>
        <authorList>
            <person name="Copeland A."/>
            <person name="Lucas S."/>
            <person name="Lapidus A."/>
            <person name="Barry K."/>
            <person name="Detter J.C."/>
            <person name="Glavina del Rio T."/>
            <person name="Dalin E."/>
            <person name="Tice H."/>
            <person name="Pitluck S."/>
            <person name="Kiss H."/>
            <person name="Brettin T."/>
            <person name="Bruce D."/>
            <person name="Han C."/>
            <person name="Tapia R."/>
            <person name="Gilna P."/>
            <person name="Schmutz J."/>
            <person name="Larimer F."/>
            <person name="Land M."/>
            <person name="Hauser L."/>
            <person name="Kyrpides N."/>
            <person name="Kim E."/>
            <person name="Stahl D."/>
            <person name="Richardson P."/>
        </authorList>
    </citation>
    <scope>NUCLEOTIDE SEQUENCE [LARGE SCALE GENOMIC DNA]</scope>
    <source>
        <strain>AAC00-1</strain>
    </source>
</reference>